<accession>Q5WM19</accession>
<keyword id="KW-0030">Aminoacyl-tRNA synthetase</keyword>
<keyword id="KW-0067">ATP-binding</keyword>
<keyword id="KW-0963">Cytoplasm</keyword>
<keyword id="KW-0436">Ligase</keyword>
<keyword id="KW-0547">Nucleotide-binding</keyword>
<keyword id="KW-0648">Protein biosynthesis</keyword>
<keyword id="KW-1185">Reference proteome</keyword>
<organism>
    <name type="scientific">Shouchella clausii (strain KSM-K16)</name>
    <name type="common">Alkalihalobacillus clausii</name>
    <dbReference type="NCBI Taxonomy" id="66692"/>
    <lineage>
        <taxon>Bacteria</taxon>
        <taxon>Bacillati</taxon>
        <taxon>Bacillota</taxon>
        <taxon>Bacilli</taxon>
        <taxon>Bacillales</taxon>
        <taxon>Bacillaceae</taxon>
        <taxon>Shouchella</taxon>
    </lineage>
</organism>
<evidence type="ECO:0000255" key="1">
    <source>
        <dbReference type="HAMAP-Rule" id="MF_00176"/>
    </source>
</evidence>
<evidence type="ECO:0000256" key="2">
    <source>
        <dbReference type="SAM" id="MobiDB-lite"/>
    </source>
</evidence>
<feature type="chain" id="PRO_0000122004" description="Serine--tRNA ligase">
    <location>
        <begin position="1"/>
        <end position="424"/>
    </location>
</feature>
<feature type="region of interest" description="Disordered" evidence="2">
    <location>
        <begin position="109"/>
        <end position="129"/>
    </location>
</feature>
<feature type="binding site" evidence="1">
    <location>
        <begin position="231"/>
        <end position="233"/>
    </location>
    <ligand>
        <name>L-serine</name>
        <dbReference type="ChEBI" id="CHEBI:33384"/>
    </ligand>
</feature>
<feature type="binding site" evidence="1">
    <location>
        <begin position="262"/>
        <end position="264"/>
    </location>
    <ligand>
        <name>ATP</name>
        <dbReference type="ChEBI" id="CHEBI:30616"/>
    </ligand>
</feature>
<feature type="binding site" evidence="1">
    <location>
        <position position="285"/>
    </location>
    <ligand>
        <name>L-serine</name>
        <dbReference type="ChEBI" id="CHEBI:33384"/>
    </ligand>
</feature>
<feature type="binding site" evidence="1">
    <location>
        <begin position="349"/>
        <end position="352"/>
    </location>
    <ligand>
        <name>ATP</name>
        <dbReference type="ChEBI" id="CHEBI:30616"/>
    </ligand>
</feature>
<feature type="binding site" evidence="1">
    <location>
        <position position="385"/>
    </location>
    <ligand>
        <name>L-serine</name>
        <dbReference type="ChEBI" id="CHEBI:33384"/>
    </ligand>
</feature>
<sequence length="424" mass="48311">MLDVKKLRSDFEGVKAQLERRNGTIEGLERFSQLDASRRTMIQEVEELKSKRNDVSEQIAALKRDKKDANSLIAEMKQVSERIKEQDEQLRSIETELEALLLTIPNIPQEDVPYGESEEDNREERKWGDVPDFSFEPRPHWELGTALDILDFERAAKVTGSRFTVYKGLGARLERALINFMMDMHATEHDYTEVLPPYIVNRASMIGTGQLPKFEEDVFKISEEDYFLIPTAEVPVTNLHRGEVLQGEQLPIAYNAYSTNFRSEAGSAGRDTRGLIRQHQFNKVELVRFSLPEDSNNQLEIMTTHAENVLKRLGLPYRVVTLCTGDLTFASTKTYDLEVWMPSANTYREISSCSNIGDFQARRANIKFRRDPKSKPEYVHTLNGSGVAVGRTVAAILENYQQEDGSIVIPEALRPYMGNVNILS</sequence>
<protein>
    <recommendedName>
        <fullName evidence="1">Serine--tRNA ligase</fullName>
        <ecNumber evidence="1">6.1.1.11</ecNumber>
    </recommendedName>
    <alternativeName>
        <fullName evidence="1">Seryl-tRNA synthetase</fullName>
        <shortName evidence="1">SerRS</shortName>
    </alternativeName>
    <alternativeName>
        <fullName evidence="1">Seryl-tRNA(Ser/Sec) synthetase</fullName>
    </alternativeName>
</protein>
<reference key="1">
    <citation type="submission" date="2003-10" db="EMBL/GenBank/DDBJ databases">
        <title>The complete genome sequence of the alkaliphilic Bacillus clausii KSM-K16.</title>
        <authorList>
            <person name="Takaki Y."/>
            <person name="Kageyama Y."/>
            <person name="Shimamura S."/>
            <person name="Suzuki H."/>
            <person name="Nishi S."/>
            <person name="Hatada Y."/>
            <person name="Kawai S."/>
            <person name="Ito S."/>
            <person name="Horikoshi K."/>
        </authorList>
    </citation>
    <scope>NUCLEOTIDE SEQUENCE [LARGE SCALE GENOMIC DNA]</scope>
    <source>
        <strain>KSM-K16</strain>
    </source>
</reference>
<proteinExistence type="inferred from homology"/>
<comment type="function">
    <text evidence="1">Catalyzes the attachment of serine to tRNA(Ser). Is also able to aminoacylate tRNA(Sec) with serine, to form the misacylated tRNA L-seryl-tRNA(Sec), which will be further converted into selenocysteinyl-tRNA(Sec).</text>
</comment>
<comment type="catalytic activity">
    <reaction evidence="1">
        <text>tRNA(Ser) + L-serine + ATP = L-seryl-tRNA(Ser) + AMP + diphosphate + H(+)</text>
        <dbReference type="Rhea" id="RHEA:12292"/>
        <dbReference type="Rhea" id="RHEA-COMP:9669"/>
        <dbReference type="Rhea" id="RHEA-COMP:9703"/>
        <dbReference type="ChEBI" id="CHEBI:15378"/>
        <dbReference type="ChEBI" id="CHEBI:30616"/>
        <dbReference type="ChEBI" id="CHEBI:33019"/>
        <dbReference type="ChEBI" id="CHEBI:33384"/>
        <dbReference type="ChEBI" id="CHEBI:78442"/>
        <dbReference type="ChEBI" id="CHEBI:78533"/>
        <dbReference type="ChEBI" id="CHEBI:456215"/>
        <dbReference type="EC" id="6.1.1.11"/>
    </reaction>
</comment>
<comment type="catalytic activity">
    <reaction evidence="1">
        <text>tRNA(Sec) + L-serine + ATP = L-seryl-tRNA(Sec) + AMP + diphosphate + H(+)</text>
        <dbReference type="Rhea" id="RHEA:42580"/>
        <dbReference type="Rhea" id="RHEA-COMP:9742"/>
        <dbReference type="Rhea" id="RHEA-COMP:10128"/>
        <dbReference type="ChEBI" id="CHEBI:15378"/>
        <dbReference type="ChEBI" id="CHEBI:30616"/>
        <dbReference type="ChEBI" id="CHEBI:33019"/>
        <dbReference type="ChEBI" id="CHEBI:33384"/>
        <dbReference type="ChEBI" id="CHEBI:78442"/>
        <dbReference type="ChEBI" id="CHEBI:78533"/>
        <dbReference type="ChEBI" id="CHEBI:456215"/>
        <dbReference type="EC" id="6.1.1.11"/>
    </reaction>
</comment>
<comment type="pathway">
    <text evidence="1">Aminoacyl-tRNA biosynthesis; selenocysteinyl-tRNA(Sec) biosynthesis; L-seryl-tRNA(Sec) from L-serine and tRNA(Sec): step 1/1.</text>
</comment>
<comment type="subunit">
    <text evidence="1">Homodimer. The tRNA molecule binds across the dimer.</text>
</comment>
<comment type="subcellular location">
    <subcellularLocation>
        <location evidence="1">Cytoplasm</location>
    </subcellularLocation>
</comment>
<comment type="domain">
    <text evidence="1">Consists of two distinct domains, a catalytic core and a N-terminal extension that is involved in tRNA binding.</text>
</comment>
<comment type="similarity">
    <text evidence="1">Belongs to the class-II aminoacyl-tRNA synthetase family. Type-1 seryl-tRNA synthetase subfamily.</text>
</comment>
<dbReference type="EC" id="6.1.1.11" evidence="1"/>
<dbReference type="EMBL" id="AP006627">
    <property type="protein sequence ID" value="BAD62556.1"/>
    <property type="molecule type" value="Genomic_DNA"/>
</dbReference>
<dbReference type="RefSeq" id="WP_011244877.1">
    <property type="nucleotide sequence ID" value="NC_006582.1"/>
</dbReference>
<dbReference type="SMR" id="Q5WM19"/>
<dbReference type="STRING" id="66692.ABC0013"/>
<dbReference type="KEGG" id="bcl:ABC0013"/>
<dbReference type="eggNOG" id="COG0172">
    <property type="taxonomic scope" value="Bacteria"/>
</dbReference>
<dbReference type="HOGENOM" id="CLU_023797_1_1_9"/>
<dbReference type="OrthoDB" id="9804647at2"/>
<dbReference type="UniPathway" id="UPA00906">
    <property type="reaction ID" value="UER00895"/>
</dbReference>
<dbReference type="Proteomes" id="UP000001168">
    <property type="component" value="Chromosome"/>
</dbReference>
<dbReference type="GO" id="GO:0005737">
    <property type="term" value="C:cytoplasm"/>
    <property type="evidence" value="ECO:0007669"/>
    <property type="project" value="UniProtKB-SubCell"/>
</dbReference>
<dbReference type="GO" id="GO:0005524">
    <property type="term" value="F:ATP binding"/>
    <property type="evidence" value="ECO:0007669"/>
    <property type="project" value="UniProtKB-UniRule"/>
</dbReference>
<dbReference type="GO" id="GO:0140096">
    <property type="term" value="F:catalytic activity, acting on a protein"/>
    <property type="evidence" value="ECO:0007669"/>
    <property type="project" value="UniProtKB-ARBA"/>
</dbReference>
<dbReference type="GO" id="GO:0004828">
    <property type="term" value="F:serine-tRNA ligase activity"/>
    <property type="evidence" value="ECO:0007669"/>
    <property type="project" value="UniProtKB-UniRule"/>
</dbReference>
<dbReference type="GO" id="GO:0016740">
    <property type="term" value="F:transferase activity"/>
    <property type="evidence" value="ECO:0007669"/>
    <property type="project" value="UniProtKB-ARBA"/>
</dbReference>
<dbReference type="GO" id="GO:0016260">
    <property type="term" value="P:selenocysteine biosynthetic process"/>
    <property type="evidence" value="ECO:0007669"/>
    <property type="project" value="UniProtKB-UniRule"/>
</dbReference>
<dbReference type="GO" id="GO:0006434">
    <property type="term" value="P:seryl-tRNA aminoacylation"/>
    <property type="evidence" value="ECO:0007669"/>
    <property type="project" value="UniProtKB-UniRule"/>
</dbReference>
<dbReference type="CDD" id="cd00770">
    <property type="entry name" value="SerRS_core"/>
    <property type="match status" value="1"/>
</dbReference>
<dbReference type="Gene3D" id="3.30.930.10">
    <property type="entry name" value="Bira Bifunctional Protein, Domain 2"/>
    <property type="match status" value="1"/>
</dbReference>
<dbReference type="Gene3D" id="1.10.287.40">
    <property type="entry name" value="Serine-tRNA synthetase, tRNA binding domain"/>
    <property type="match status" value="1"/>
</dbReference>
<dbReference type="HAMAP" id="MF_00176">
    <property type="entry name" value="Ser_tRNA_synth_type1"/>
    <property type="match status" value="1"/>
</dbReference>
<dbReference type="InterPro" id="IPR002314">
    <property type="entry name" value="aa-tRNA-synt_IIb"/>
</dbReference>
<dbReference type="InterPro" id="IPR006195">
    <property type="entry name" value="aa-tRNA-synth_II"/>
</dbReference>
<dbReference type="InterPro" id="IPR045864">
    <property type="entry name" value="aa-tRNA-synth_II/BPL/LPL"/>
</dbReference>
<dbReference type="InterPro" id="IPR002317">
    <property type="entry name" value="Ser-tRNA-ligase_type_1"/>
</dbReference>
<dbReference type="InterPro" id="IPR015866">
    <property type="entry name" value="Ser-tRNA-synth_1_N"/>
</dbReference>
<dbReference type="InterPro" id="IPR042103">
    <property type="entry name" value="SerRS_1_N_sf"/>
</dbReference>
<dbReference type="InterPro" id="IPR033729">
    <property type="entry name" value="SerRS_core"/>
</dbReference>
<dbReference type="InterPro" id="IPR010978">
    <property type="entry name" value="tRNA-bd_arm"/>
</dbReference>
<dbReference type="NCBIfam" id="TIGR00414">
    <property type="entry name" value="serS"/>
    <property type="match status" value="1"/>
</dbReference>
<dbReference type="PANTHER" id="PTHR43697:SF1">
    <property type="entry name" value="SERINE--TRNA LIGASE"/>
    <property type="match status" value="1"/>
</dbReference>
<dbReference type="PANTHER" id="PTHR43697">
    <property type="entry name" value="SERYL-TRNA SYNTHETASE"/>
    <property type="match status" value="1"/>
</dbReference>
<dbReference type="Pfam" id="PF02403">
    <property type="entry name" value="Seryl_tRNA_N"/>
    <property type="match status" value="1"/>
</dbReference>
<dbReference type="Pfam" id="PF00587">
    <property type="entry name" value="tRNA-synt_2b"/>
    <property type="match status" value="1"/>
</dbReference>
<dbReference type="PIRSF" id="PIRSF001529">
    <property type="entry name" value="Ser-tRNA-synth_IIa"/>
    <property type="match status" value="1"/>
</dbReference>
<dbReference type="PRINTS" id="PR00981">
    <property type="entry name" value="TRNASYNTHSER"/>
</dbReference>
<dbReference type="SUPFAM" id="SSF55681">
    <property type="entry name" value="Class II aaRS and biotin synthetases"/>
    <property type="match status" value="1"/>
</dbReference>
<dbReference type="SUPFAM" id="SSF46589">
    <property type="entry name" value="tRNA-binding arm"/>
    <property type="match status" value="1"/>
</dbReference>
<dbReference type="PROSITE" id="PS50862">
    <property type="entry name" value="AA_TRNA_LIGASE_II"/>
    <property type="match status" value="1"/>
</dbReference>
<gene>
    <name evidence="1" type="primary">serS</name>
    <name type="ordered locus">ABC0013</name>
</gene>
<name>SYS_SHOC1</name>